<keyword id="KW-0167">Capsid protein</keyword>
<keyword id="KW-1152">Outer capsid protein</keyword>
<keyword id="KW-1162">Viral penetration into host cytoplasm</keyword>
<keyword id="KW-1173">Viral penetration via permeabilization of host membrane</keyword>
<keyword id="KW-0946">Virion</keyword>
<keyword id="KW-1160">Virus entry into host cell</keyword>
<dbReference type="EMBL" id="M58030">
    <property type="protein sequence ID" value="AAA42802.1"/>
    <property type="molecule type" value="Genomic_RNA"/>
</dbReference>
<dbReference type="PIR" id="A45339">
    <property type="entry name" value="A45339"/>
</dbReference>
<dbReference type="SMR" id="P21230"/>
<dbReference type="GO" id="GO:0039624">
    <property type="term" value="C:viral outer capsid"/>
    <property type="evidence" value="ECO:0007669"/>
    <property type="project" value="UniProtKB-KW"/>
</dbReference>
<dbReference type="GO" id="GO:0005198">
    <property type="term" value="F:structural molecule activity"/>
    <property type="evidence" value="ECO:0007669"/>
    <property type="project" value="InterPro"/>
</dbReference>
<dbReference type="GO" id="GO:0140267">
    <property type="term" value="P:symbiont entry into host cell via permeabilization of host membrane"/>
    <property type="evidence" value="ECO:0007669"/>
    <property type="project" value="UniProtKB-KW"/>
</dbReference>
<dbReference type="InterPro" id="IPR000145">
    <property type="entry name" value="Capsid_VP5_Orbivir"/>
</dbReference>
<dbReference type="Pfam" id="PF00901">
    <property type="entry name" value="Orbi_VP5"/>
    <property type="match status" value="1"/>
</dbReference>
<feature type="chain" id="PRO_0000222720" description="Outer capsid protein VP5">
    <location>
        <begin position="1"/>
        <end position="480"/>
    </location>
</feature>
<feature type="region of interest" description="Involved in membrane permeabilization" evidence="1">
    <location>
        <begin position="1"/>
        <end position="48"/>
    </location>
</feature>
<evidence type="ECO:0000250" key="1"/>
<evidence type="ECO:0000305" key="2"/>
<accession>P21230</accession>
<protein>
    <recommendedName>
        <fullName>Outer capsid protein VP5</fullName>
    </recommendedName>
</protein>
<organismHost>
    <name type="scientific">Ixodes</name>
    <dbReference type="NCBI Taxonomy" id="6944"/>
</organismHost>
<organismHost>
    <name type="scientific">Laridae</name>
    <name type="common">gulls</name>
    <dbReference type="NCBI Taxonomy" id="8910"/>
</organismHost>
<organismHost>
    <name type="scientific">Pelecaniformes</name>
    <name type="common">Ibis, herons and pelicans</name>
    <dbReference type="NCBI Taxonomy" id="9205"/>
</organismHost>
<organism>
    <name type="scientific">Broadhaven virus</name>
    <name type="common">BRD</name>
    <dbReference type="NCBI Taxonomy" id="10893"/>
    <lineage>
        <taxon>Viruses</taxon>
        <taxon>Riboviria</taxon>
        <taxon>Orthornavirae</taxon>
        <taxon>Duplornaviricota</taxon>
        <taxon>Resentoviricetes</taxon>
        <taxon>Reovirales</taxon>
        <taxon>Sedoreoviridae</taxon>
        <taxon>Orbivirus</taxon>
        <taxon>Great Island virus</taxon>
    </lineage>
</organism>
<name>VP5_BRD</name>
<gene>
    <name type="primary">Segment-6</name>
</gene>
<reference key="1">
    <citation type="journal article" date="1990" name="Virology">
        <title>RNA segment 5 of broadhaven virus, a tick-borne orbivirus, shows sequence homology with segment 5 of bluetongue virus.</title>
        <authorList>
            <person name="Moss S.R."/>
            <person name="Fukusho A."/>
            <person name="Nuttall P.A."/>
        </authorList>
    </citation>
    <scope>NUCLEOTIDE SEQUENCE [GENOMIC RNA]</scope>
</reference>
<sequence>MTSKRLGARFPGFLNRIGSGITRAARSDTTKRIPSAAGRAVERVAASEIGQRAIAGVVEGAATAALTGESVGESVKRAVILNVAGVHQTVPDPLNPVEIETQAKLRELDLANKREEAQIRHNKSMLQKEAQILGEVQHLMTVQEHVDQAKYEVRSGRALQAAQAIVKGERQQLDRVTKALIRENEMRTTDERKLIEGMRHNYSALAKSVDADSALIEEAVEQTVDIGGEIAEHATASIPFVGEAVSAGMATARGAMQIYRLGKTIHAITGLHTNHCEIPAIHQGAIETLLTSDSPTSDASLAQITSSRVRHLREIESELAHLDAEVKPAMQQMCQDIAKLAPDHLKKRRGVIHMNAAHELRVPLKQRPMIHSYTSPWDSDYVLILHVVGPYHSGQAFVFCLDLALDQFHFEEDTGSKPPVPPPRHRAPADFSARPAPISLSPLLAILTQRGCIGPGWPRVLMIRPCISALYRTRPPTRRC</sequence>
<comment type="function">
    <text evidence="1">VP5 protein is one of the two proteins (with VP2) which constitute the virus particle outer capsid. Acts as a membrane permeabilization protein that mediates release of viral particles from endosomal compartments into the cytoplasm. Permeabilization activity is probably negatively regulated by VP2 and is triggered by endosomal degradation of VP2 and exposure to low pH (By similarity).</text>
</comment>
<comment type="subcellular location">
    <subcellularLocation>
        <location evidence="2">Virion</location>
    </subcellularLocation>
</comment>
<comment type="similarity">
    <text evidence="2">Belongs to the orbivirus VP5 family.</text>
</comment>
<proteinExistence type="inferred from homology"/>